<sequence length="446" mass="49762">MPLNDTTMDRRGLVVERDFSFRILTACFLSLLILSTLLGNTLVCAAVIRFRHLRSKVTNFFVISLAVSDLLVAVLVMPWKAVAEIAGFWPFGSFCNIWVAFDIMCSTASILNLCVISVDRYWAISSPFRYERKMTPKAAFILISVAWTLSVLISFIPVQLNWHKARPLSSPDGNVSSQDETMDNCDSSLSRTYAISSSLISFYIPVAIMIVTYTRIYRIAQKQIRRISALERAAVHAKNCQNTTGNGANVECSQPESSFKMSFKRETKVLKTLSVIMGVFVCCWLPFFILNCMVPFCESDLPSGETKPFCIDSITFDVFVWFGWANSSLNPIIYAFNADFRKAFSTLLGCYRLCPTANNAIETVSINNNGAVFSSHHEPRGSISKDCNLVYLIPQAVTSRDPKKEEGGGSKPLEKTSPALSVILDYEVDLSLEKINPITQNGQHKT</sequence>
<protein>
    <recommendedName>
        <fullName>D(1A) dopamine receptor</fullName>
    </recommendedName>
    <alternativeName>
        <fullName>Dopamine D1 receptor</fullName>
    </alternativeName>
</protein>
<reference key="1">
    <citation type="journal article" date="1993" name="Mol. Pharmacol.">
        <title>Cloning and characterization of the opossum kidney cell D1 dopamine receptor: expression of identical D1A and D1B dopamine receptor mRNAs in opossum kidney and brain.</title>
        <authorList>
            <person name="Nash S.R."/>
            <person name="Godinot N."/>
            <person name="Caron M.G."/>
        </authorList>
    </citation>
    <scope>NUCLEOTIDE SEQUENCE [MRNA]</scope>
    <source>
        <tissue>Kidney</tissue>
    </source>
</reference>
<keyword id="KW-1003">Cell membrane</keyword>
<keyword id="KW-0966">Cell projection</keyword>
<keyword id="KW-1015">Disulfide bond</keyword>
<keyword id="KW-0256">Endoplasmic reticulum</keyword>
<keyword id="KW-0297">G-protein coupled receptor</keyword>
<keyword id="KW-0325">Glycoprotein</keyword>
<keyword id="KW-0449">Lipoprotein</keyword>
<keyword id="KW-0472">Membrane</keyword>
<keyword id="KW-0564">Palmitate</keyword>
<keyword id="KW-0675">Receptor</keyword>
<keyword id="KW-0770">Synapse</keyword>
<keyword id="KW-0807">Transducer</keyword>
<keyword id="KW-0812">Transmembrane</keyword>
<keyword id="KW-1133">Transmembrane helix</keyword>
<proteinExistence type="evidence at transcript level"/>
<feature type="chain" id="PRO_0000069372" description="D(1A) dopamine receptor">
    <location>
        <begin position="1"/>
        <end position="446"/>
    </location>
</feature>
<feature type="topological domain" description="Extracellular" evidence="5">
    <location>
        <begin position="1"/>
        <end position="22"/>
    </location>
</feature>
<feature type="transmembrane region" description="Helical; Name=1" evidence="5">
    <location>
        <begin position="23"/>
        <end position="48"/>
    </location>
</feature>
<feature type="topological domain" description="Cytoplasmic" evidence="5">
    <location>
        <begin position="49"/>
        <end position="59"/>
    </location>
</feature>
<feature type="transmembrane region" description="Helical; Name=2" evidence="5">
    <location>
        <begin position="60"/>
        <end position="86"/>
    </location>
</feature>
<feature type="topological domain" description="Extracellular" evidence="5">
    <location>
        <begin position="87"/>
        <end position="95"/>
    </location>
</feature>
<feature type="transmembrane region" description="Helical; Name=3" evidence="5">
    <location>
        <begin position="96"/>
        <end position="118"/>
    </location>
</feature>
<feature type="topological domain" description="Cytoplasmic" evidence="5">
    <location>
        <begin position="119"/>
        <end position="137"/>
    </location>
</feature>
<feature type="transmembrane region" description="Helical; Name=4" evidence="5">
    <location>
        <begin position="138"/>
        <end position="162"/>
    </location>
</feature>
<feature type="topological domain" description="Extracellular" evidence="5">
    <location>
        <begin position="163"/>
        <end position="191"/>
    </location>
</feature>
<feature type="transmembrane region" description="Helical; Name=5" evidence="5">
    <location>
        <begin position="192"/>
        <end position="217"/>
    </location>
</feature>
<feature type="topological domain" description="Cytoplasmic" evidence="5">
    <location>
        <begin position="218"/>
        <end position="271"/>
    </location>
</feature>
<feature type="transmembrane region" description="Helical; Name=6" evidence="5">
    <location>
        <begin position="272"/>
        <end position="298"/>
    </location>
</feature>
<feature type="topological domain" description="Extracellular" evidence="5">
    <location>
        <begin position="299"/>
        <end position="315"/>
    </location>
</feature>
<feature type="transmembrane region" description="Helical; Name=7" evidence="5">
    <location>
        <begin position="316"/>
        <end position="340"/>
    </location>
</feature>
<feature type="topological domain" description="Cytoplasmic" evidence="5">
    <location>
        <begin position="341"/>
        <end position="446"/>
    </location>
</feature>
<feature type="lipid moiety-binding region" description="S-palmitoyl cysteine" evidence="1">
    <location>
        <position position="350"/>
    </location>
</feature>
<feature type="lipid moiety-binding region" description="S-palmitoyl cysteine" evidence="1">
    <location>
        <position position="354"/>
    </location>
</feature>
<feature type="glycosylation site" description="N-linked (GlcNAc...) asparagine" evidence="5">
    <location>
        <position position="4"/>
    </location>
</feature>
<feature type="disulfide bond" evidence="6">
    <location>
        <begin position="95"/>
        <end position="185"/>
    </location>
</feature>
<accession>P42288</accession>
<name>DRD1_DIDVI</name>
<organism>
    <name type="scientific">Didelphis virginiana</name>
    <name type="common">North American opossum</name>
    <name type="synonym">Didelphis marsupialis virginiana</name>
    <dbReference type="NCBI Taxonomy" id="9267"/>
    <lineage>
        <taxon>Eukaryota</taxon>
        <taxon>Metazoa</taxon>
        <taxon>Chordata</taxon>
        <taxon>Craniata</taxon>
        <taxon>Vertebrata</taxon>
        <taxon>Euteleostomi</taxon>
        <taxon>Mammalia</taxon>
        <taxon>Metatheria</taxon>
        <taxon>Didelphimorphia</taxon>
        <taxon>Didelphidae</taxon>
        <taxon>Didelphis</taxon>
    </lineage>
</organism>
<gene>
    <name type="primary">DRD1</name>
</gene>
<evidence type="ECO:0000250" key="1"/>
<evidence type="ECO:0000250" key="2">
    <source>
        <dbReference type="UniProtKB" id="P18901"/>
    </source>
</evidence>
<evidence type="ECO:0000250" key="3">
    <source>
        <dbReference type="UniProtKB" id="P21728"/>
    </source>
</evidence>
<evidence type="ECO:0000250" key="4">
    <source>
        <dbReference type="UniProtKB" id="Q61616"/>
    </source>
</evidence>
<evidence type="ECO:0000255" key="5"/>
<evidence type="ECO:0000255" key="6">
    <source>
        <dbReference type="PROSITE-ProRule" id="PRU00521"/>
    </source>
</evidence>
<comment type="function">
    <text>This is one of the five types (D1 to D5) of receptors for dopamine. The activity of this receptor is mediated by G proteins which activate adenylyl cyclase.</text>
</comment>
<comment type="subunit">
    <text evidence="2">Interacts with DNAJC14 via its C-terminus.</text>
</comment>
<comment type="subcellular location">
    <subcellularLocation>
        <location evidence="2">Cell membrane</location>
        <topology evidence="2">Multi-pass membrane protein</topology>
    </subcellularLocation>
    <subcellularLocation>
        <location evidence="2">Endoplasmic reticulum membrane</location>
        <topology evidence="2">Multi-pass membrane protein</topology>
    </subcellularLocation>
    <subcellularLocation>
        <location evidence="3">Cell projection</location>
        <location evidence="3">Cilium membrane</location>
        <topology evidence="5">Multi-pass membrane protein</topology>
    </subcellularLocation>
    <subcellularLocation>
        <location evidence="4">Cell projection</location>
        <location evidence="4">Dendrite</location>
    </subcellularLocation>
    <subcellularLocation>
        <location evidence="4">Cell projection</location>
        <location evidence="4">Dendritic spine</location>
    </subcellularLocation>
    <text evidence="2">Transport from the endoplasmic reticulum to the cell surface is regulated by interaction with DNAJC14.</text>
</comment>
<comment type="similarity">
    <text evidence="6">Belongs to the G-protein coupled receptor 1 family.</text>
</comment>
<dbReference type="EMBL" id="S67258">
    <property type="protein sequence ID" value="AAB29143.1"/>
    <property type="molecule type" value="mRNA"/>
</dbReference>
<dbReference type="SMR" id="P42288"/>
<dbReference type="GlyCosmos" id="P42288">
    <property type="glycosylation" value="1 site, No reported glycans"/>
</dbReference>
<dbReference type="GO" id="GO:0060170">
    <property type="term" value="C:ciliary membrane"/>
    <property type="evidence" value="ECO:0007669"/>
    <property type="project" value="UniProtKB-SubCell"/>
</dbReference>
<dbReference type="GO" id="GO:0043197">
    <property type="term" value="C:dendritic spine"/>
    <property type="evidence" value="ECO:0000250"/>
    <property type="project" value="UniProtKB"/>
</dbReference>
<dbReference type="GO" id="GO:0005789">
    <property type="term" value="C:endoplasmic reticulum membrane"/>
    <property type="evidence" value="ECO:0007669"/>
    <property type="project" value="UniProtKB-SubCell"/>
</dbReference>
<dbReference type="GO" id="GO:0001588">
    <property type="term" value="F:dopamine neurotransmitter receptor activity, coupled via Gs"/>
    <property type="evidence" value="ECO:0007669"/>
    <property type="project" value="TreeGrafter"/>
</dbReference>
<dbReference type="GO" id="GO:0004930">
    <property type="term" value="F:G protein-coupled receptor activity"/>
    <property type="evidence" value="ECO:0007669"/>
    <property type="project" value="UniProtKB-KW"/>
</dbReference>
<dbReference type="GO" id="GO:0071880">
    <property type="term" value="P:adenylate cyclase-activating adrenergic receptor signaling pathway"/>
    <property type="evidence" value="ECO:0007669"/>
    <property type="project" value="TreeGrafter"/>
</dbReference>
<dbReference type="GO" id="GO:0043410">
    <property type="term" value="P:positive regulation of MAPK cascade"/>
    <property type="evidence" value="ECO:0007669"/>
    <property type="project" value="TreeGrafter"/>
</dbReference>
<dbReference type="GO" id="GO:0042311">
    <property type="term" value="P:vasodilation"/>
    <property type="evidence" value="ECO:0007669"/>
    <property type="project" value="InterPro"/>
</dbReference>
<dbReference type="CDD" id="cd15320">
    <property type="entry name" value="7tmA_D1A_dopamine_R"/>
    <property type="match status" value="1"/>
</dbReference>
<dbReference type="FunFam" id="1.20.1070.10:FF:000045">
    <property type="entry name" value="D(1A) dopamine receptor"/>
    <property type="match status" value="1"/>
</dbReference>
<dbReference type="Gene3D" id="1.20.1070.10">
    <property type="entry name" value="Rhodopsin 7-helix transmembrane proteins"/>
    <property type="match status" value="1"/>
</dbReference>
<dbReference type="InterPro" id="IPR001413">
    <property type="entry name" value="Dopamine_D1_rcpt"/>
</dbReference>
<dbReference type="InterPro" id="IPR000929">
    <property type="entry name" value="Dopamine_rcpt"/>
</dbReference>
<dbReference type="InterPro" id="IPR000276">
    <property type="entry name" value="GPCR_Rhodpsn"/>
</dbReference>
<dbReference type="InterPro" id="IPR017452">
    <property type="entry name" value="GPCR_Rhodpsn_7TM"/>
</dbReference>
<dbReference type="PANTHER" id="PTHR24248">
    <property type="entry name" value="ADRENERGIC RECEPTOR-RELATED G-PROTEIN COUPLED RECEPTOR"/>
    <property type="match status" value="1"/>
</dbReference>
<dbReference type="PANTHER" id="PTHR24248:SF139">
    <property type="entry name" value="D(1A) DOPAMINE RECEPTOR"/>
    <property type="match status" value="1"/>
</dbReference>
<dbReference type="Pfam" id="PF00001">
    <property type="entry name" value="7tm_1"/>
    <property type="match status" value="1"/>
</dbReference>
<dbReference type="PRINTS" id="PR00565">
    <property type="entry name" value="DOPAMINED1AR"/>
</dbReference>
<dbReference type="PRINTS" id="PR00242">
    <property type="entry name" value="DOPAMINER"/>
</dbReference>
<dbReference type="PRINTS" id="PR00237">
    <property type="entry name" value="GPCRRHODOPSN"/>
</dbReference>
<dbReference type="SMART" id="SM01381">
    <property type="entry name" value="7TM_GPCR_Srsx"/>
    <property type="match status" value="1"/>
</dbReference>
<dbReference type="SUPFAM" id="SSF81321">
    <property type="entry name" value="Family A G protein-coupled receptor-like"/>
    <property type="match status" value="1"/>
</dbReference>
<dbReference type="PROSITE" id="PS00237">
    <property type="entry name" value="G_PROTEIN_RECEP_F1_1"/>
    <property type="match status" value="1"/>
</dbReference>
<dbReference type="PROSITE" id="PS50262">
    <property type="entry name" value="G_PROTEIN_RECEP_F1_2"/>
    <property type="match status" value="1"/>
</dbReference>